<organism>
    <name type="scientific">Sus scrofa</name>
    <name type="common">Pig</name>
    <dbReference type="NCBI Taxonomy" id="9823"/>
    <lineage>
        <taxon>Eukaryota</taxon>
        <taxon>Metazoa</taxon>
        <taxon>Chordata</taxon>
        <taxon>Craniata</taxon>
        <taxon>Vertebrata</taxon>
        <taxon>Euteleostomi</taxon>
        <taxon>Mammalia</taxon>
        <taxon>Eutheria</taxon>
        <taxon>Laurasiatheria</taxon>
        <taxon>Artiodactyla</taxon>
        <taxon>Suina</taxon>
        <taxon>Suidae</taxon>
        <taxon>Sus</taxon>
    </lineage>
</organism>
<evidence type="ECO:0000250" key="1"/>
<evidence type="ECO:0000255" key="2"/>
<evidence type="ECO:0000269" key="3">
    <source>
    </source>
</evidence>
<evidence type="ECO:0000305" key="4"/>
<sequence length="435" mass="48507">MAAHLLPICTLFLNLLSVAQGSRDPVVLNRPFTTIWNANTQWCLKRHGVDVDVSVFEVVVNPGQTFRGPNMTIFYSSQLGTYPYYTSAGEPVFGGLPQNASLDVHLNRTFKDILAAMPESNFSGLAVIDWEAWRPRWAFNWDAKDIYRQRSRALVQKQHPDWPAPWVEAAAQDQFQEAAQTWMAGTLKLGQTLRPHGLWGFYGFPDCYNYDFQSSNYTGQCPPGVSAQNDQLGWLWGQSRALYPSIYLPSALEGTNKTQLYVQHRVNEAFRVAAAAGDPNLPVLPYAQIFHDMTNRLLSREELEHSLGESAAQGAAGVVLWVSWENTRTKESCQSIKEYVDTTLGPFILNVTSGALLCSQAVCSGHGRCVRRPSHTEALPILNPSSFSIKPTPGGGPLTLQGALSLKDRVQMAEEFQCRCYPGWRGTWCEQQGTR</sequence>
<accession>Q6RHW4</accession>
<protein>
    <recommendedName>
        <fullName>Hyaluronidase-1</fullName>
        <shortName>Hyal-1</shortName>
        <ecNumber>3.2.1.35</ecNumber>
    </recommendedName>
    <alternativeName>
        <fullName>Hyaluronoglucosaminidase-1</fullName>
    </alternativeName>
</protein>
<keyword id="KW-1015">Disulfide bond</keyword>
<keyword id="KW-0245">EGF-like domain</keyword>
<keyword id="KW-0325">Glycoprotein</keyword>
<keyword id="KW-0326">Glycosidase</keyword>
<keyword id="KW-0378">Hydrolase</keyword>
<keyword id="KW-0458">Lysosome</keyword>
<keyword id="KW-1185">Reference proteome</keyword>
<keyword id="KW-0964">Secreted</keyword>
<keyword id="KW-0732">Signal</keyword>
<dbReference type="EC" id="3.2.1.35"/>
<dbReference type="EMBL" id="AY497543">
    <property type="protein sequence ID" value="AAR91599.1"/>
    <property type="molecule type" value="mRNA"/>
</dbReference>
<dbReference type="RefSeq" id="NP_999606.1">
    <property type="nucleotide sequence ID" value="NM_214441.1"/>
</dbReference>
<dbReference type="SMR" id="Q6RHW4"/>
<dbReference type="FunCoup" id="Q6RHW4">
    <property type="interactions" value="234"/>
</dbReference>
<dbReference type="STRING" id="9823.ENSSSCP00000056338"/>
<dbReference type="CAZy" id="GH56">
    <property type="family name" value="Glycoside Hydrolase Family 56"/>
</dbReference>
<dbReference type="GlyCosmos" id="Q6RHW4">
    <property type="glycosylation" value="7 sites, No reported glycans"/>
</dbReference>
<dbReference type="GlyGen" id="Q6RHW4">
    <property type="glycosylation" value="8 sites"/>
</dbReference>
<dbReference type="PaxDb" id="9823-ENSSSCP00000012158"/>
<dbReference type="PeptideAtlas" id="Q6RHW4"/>
<dbReference type="Ensembl" id="ENSSSCT00025099366.1">
    <property type="protein sequence ID" value="ENSSSCP00025043731.1"/>
    <property type="gene ID" value="ENSSSCG00025072252.1"/>
</dbReference>
<dbReference type="Ensembl" id="ENSSSCT00035110453.1">
    <property type="protein sequence ID" value="ENSSSCP00035048195.1"/>
    <property type="gene ID" value="ENSSSCG00035080541.1"/>
</dbReference>
<dbReference type="Ensembl" id="ENSSSCT00065096081.1">
    <property type="protein sequence ID" value="ENSSSCP00065042049.1"/>
    <property type="gene ID" value="ENSSSCG00065069969.1"/>
</dbReference>
<dbReference type="GeneID" id="404698"/>
<dbReference type="KEGG" id="ssc:404698"/>
<dbReference type="CTD" id="3373"/>
<dbReference type="eggNOG" id="ENOG502QTUU">
    <property type="taxonomic scope" value="Eukaryota"/>
</dbReference>
<dbReference type="InParanoid" id="Q6RHW4"/>
<dbReference type="OrthoDB" id="5796153at2759"/>
<dbReference type="BRENDA" id="3.2.1.35">
    <property type="organism ID" value="6170"/>
</dbReference>
<dbReference type="Proteomes" id="UP000008227">
    <property type="component" value="Unplaced"/>
</dbReference>
<dbReference type="Proteomes" id="UP000314985">
    <property type="component" value="Unplaced"/>
</dbReference>
<dbReference type="Proteomes" id="UP000694570">
    <property type="component" value="Unplaced"/>
</dbReference>
<dbReference type="Proteomes" id="UP000694571">
    <property type="component" value="Unplaced"/>
</dbReference>
<dbReference type="Proteomes" id="UP000694720">
    <property type="component" value="Unplaced"/>
</dbReference>
<dbReference type="Proteomes" id="UP000694722">
    <property type="component" value="Unplaced"/>
</dbReference>
<dbReference type="Proteomes" id="UP000694723">
    <property type="component" value="Unplaced"/>
</dbReference>
<dbReference type="Proteomes" id="UP000694724">
    <property type="component" value="Unplaced"/>
</dbReference>
<dbReference type="Proteomes" id="UP000694725">
    <property type="component" value="Unplaced"/>
</dbReference>
<dbReference type="Proteomes" id="UP000694726">
    <property type="component" value="Unplaced"/>
</dbReference>
<dbReference type="Proteomes" id="UP000694727">
    <property type="component" value="Unplaced"/>
</dbReference>
<dbReference type="Proteomes" id="UP000694728">
    <property type="component" value="Unplaced"/>
</dbReference>
<dbReference type="GO" id="GO:0031410">
    <property type="term" value="C:cytoplasmic vesicle"/>
    <property type="evidence" value="ECO:0000250"/>
    <property type="project" value="UniProtKB"/>
</dbReference>
<dbReference type="GO" id="GO:0005615">
    <property type="term" value="C:extracellular space"/>
    <property type="evidence" value="ECO:0000250"/>
    <property type="project" value="UniProtKB"/>
</dbReference>
<dbReference type="GO" id="GO:0036117">
    <property type="term" value="C:hyaluranon cable"/>
    <property type="evidence" value="ECO:0000250"/>
    <property type="project" value="UniProtKB"/>
</dbReference>
<dbReference type="GO" id="GO:0005764">
    <property type="term" value="C:lysosome"/>
    <property type="evidence" value="ECO:0000250"/>
    <property type="project" value="UniProtKB"/>
</dbReference>
<dbReference type="GO" id="GO:0004415">
    <property type="term" value="F:hyalurononglucosaminidase activity"/>
    <property type="evidence" value="ECO:0000250"/>
    <property type="project" value="UniProtKB"/>
</dbReference>
<dbReference type="GO" id="GO:0005975">
    <property type="term" value="P:carbohydrate metabolic process"/>
    <property type="evidence" value="ECO:0007669"/>
    <property type="project" value="InterPro"/>
</dbReference>
<dbReference type="GO" id="GO:0051216">
    <property type="term" value="P:cartilage development"/>
    <property type="evidence" value="ECO:0000250"/>
    <property type="project" value="UniProtKB"/>
</dbReference>
<dbReference type="GO" id="GO:0071347">
    <property type="term" value="P:cellular response to interleukin-1"/>
    <property type="evidence" value="ECO:0000250"/>
    <property type="project" value="UniProtKB"/>
</dbReference>
<dbReference type="GO" id="GO:0071467">
    <property type="term" value="P:cellular response to pH"/>
    <property type="evidence" value="ECO:0000250"/>
    <property type="project" value="UniProtKB"/>
</dbReference>
<dbReference type="GO" id="GO:0036120">
    <property type="term" value="P:cellular response to platelet-derived growth factor stimulus"/>
    <property type="evidence" value="ECO:0000250"/>
    <property type="project" value="UniProtKB"/>
</dbReference>
<dbReference type="GO" id="GO:0071493">
    <property type="term" value="P:cellular response to UV-B"/>
    <property type="evidence" value="ECO:0000250"/>
    <property type="project" value="UniProtKB"/>
</dbReference>
<dbReference type="GO" id="GO:0030214">
    <property type="term" value="P:hyaluronan catabolic process"/>
    <property type="evidence" value="ECO:0000250"/>
    <property type="project" value="UniProtKB"/>
</dbReference>
<dbReference type="GO" id="GO:0030212">
    <property type="term" value="P:hyaluronan metabolic process"/>
    <property type="evidence" value="ECO:0000250"/>
    <property type="project" value="UniProtKB"/>
</dbReference>
<dbReference type="GO" id="GO:0006954">
    <property type="term" value="P:inflammatory response"/>
    <property type="evidence" value="ECO:0000250"/>
    <property type="project" value="UniProtKB"/>
</dbReference>
<dbReference type="GO" id="GO:0030308">
    <property type="term" value="P:negative regulation of cell growth"/>
    <property type="evidence" value="ECO:0000250"/>
    <property type="project" value="UniProtKB"/>
</dbReference>
<dbReference type="GO" id="GO:0045766">
    <property type="term" value="P:positive regulation of angiogenesis"/>
    <property type="evidence" value="ECO:0000250"/>
    <property type="project" value="UniProtKB"/>
</dbReference>
<dbReference type="GO" id="GO:0045785">
    <property type="term" value="P:positive regulation of cell adhesion"/>
    <property type="evidence" value="ECO:0000250"/>
    <property type="project" value="UniProtKB"/>
</dbReference>
<dbReference type="GO" id="GO:0030307">
    <property type="term" value="P:positive regulation of cell growth"/>
    <property type="evidence" value="ECO:0000250"/>
    <property type="project" value="UniProtKB"/>
</dbReference>
<dbReference type="GO" id="GO:1900106">
    <property type="term" value="P:positive regulation of hyaluranon cable assembly"/>
    <property type="evidence" value="ECO:0000250"/>
    <property type="project" value="UniProtKB"/>
</dbReference>
<dbReference type="GO" id="GO:0046677">
    <property type="term" value="P:response to antibiotic"/>
    <property type="evidence" value="ECO:0000250"/>
    <property type="project" value="UniProtKB"/>
</dbReference>
<dbReference type="GO" id="GO:0000302">
    <property type="term" value="P:response to reactive oxygen species"/>
    <property type="evidence" value="ECO:0000250"/>
    <property type="project" value="UniProtKB"/>
</dbReference>
<dbReference type="GO" id="GO:0009615">
    <property type="term" value="P:response to virus"/>
    <property type="evidence" value="ECO:0000250"/>
    <property type="project" value="UniProtKB"/>
</dbReference>
<dbReference type="FunFam" id="3.20.20.70:FF:000065">
    <property type="entry name" value="Hyaluronidase"/>
    <property type="match status" value="1"/>
</dbReference>
<dbReference type="Gene3D" id="3.20.20.70">
    <property type="entry name" value="Aldolase class I"/>
    <property type="match status" value="1"/>
</dbReference>
<dbReference type="InterPro" id="IPR013785">
    <property type="entry name" value="Aldolase_TIM"/>
</dbReference>
<dbReference type="InterPro" id="IPR017853">
    <property type="entry name" value="Glycoside_hydrolase_SF"/>
</dbReference>
<dbReference type="InterPro" id="IPR018155">
    <property type="entry name" value="Hyaluronidase"/>
</dbReference>
<dbReference type="PANTHER" id="PTHR11769">
    <property type="entry name" value="HYALURONIDASE"/>
    <property type="match status" value="1"/>
</dbReference>
<dbReference type="PANTHER" id="PTHR11769:SF23">
    <property type="entry name" value="HYALURONIDASE-1"/>
    <property type="match status" value="1"/>
</dbReference>
<dbReference type="Pfam" id="PF01630">
    <property type="entry name" value="Glyco_hydro_56"/>
    <property type="match status" value="1"/>
</dbReference>
<dbReference type="PIRSF" id="PIRSF038193">
    <property type="entry name" value="Hyaluronidase"/>
    <property type="match status" value="1"/>
</dbReference>
<dbReference type="PRINTS" id="PR00846">
    <property type="entry name" value="GLHYDRLASE56"/>
</dbReference>
<dbReference type="SUPFAM" id="SSF51445">
    <property type="entry name" value="(Trans)glycosidases"/>
    <property type="match status" value="1"/>
</dbReference>
<dbReference type="PROSITE" id="PS00022">
    <property type="entry name" value="EGF_1"/>
    <property type="match status" value="1"/>
</dbReference>
<dbReference type="PROSITE" id="PS01186">
    <property type="entry name" value="EGF_2"/>
    <property type="match status" value="1"/>
</dbReference>
<reference key="1">
    <citation type="journal article" date="2004" name="Cytogenet. Genome Res.">
        <title>Molecular characterization of porcine hyaluronidase genes 1, 2, and 3 clustered on SSC13q21.</title>
        <authorList>
            <person name="Gatphayak K."/>
            <person name="Knorr C."/>
            <person name="Beck J."/>
            <person name="Brenig B."/>
        </authorList>
    </citation>
    <scope>NUCLEOTIDE SEQUENCE [MRNA]</scope>
    <scope>TISSUE SPECIFICITY</scope>
</reference>
<gene>
    <name type="primary">HYAL1</name>
</gene>
<comment type="function">
    <text evidence="1">May have a role in promoting tumor progression. May block the TGFB1-enhanced cell growth (By similarity).</text>
</comment>
<comment type="catalytic activity">
    <reaction>
        <text>Random hydrolysis of (1-&gt;4)-linkages between N-acetyl-beta-D-glucosamine and D-glucuronate residues in hyaluronate.</text>
        <dbReference type="EC" id="3.2.1.35"/>
    </reaction>
</comment>
<comment type="subcellular location">
    <subcellularLocation>
        <location evidence="1">Secreted</location>
    </subcellularLocation>
    <subcellularLocation>
        <location evidence="1">Lysosome</location>
    </subcellularLocation>
</comment>
<comment type="tissue specificity">
    <text evidence="3">Highly expressed in spleen, kidney, and lung.</text>
</comment>
<comment type="similarity">
    <text evidence="4">Belongs to the glycosyl hydrolase 56 family.</text>
</comment>
<feature type="signal peptide" evidence="2">
    <location>
        <begin position="1"/>
        <end position="21"/>
    </location>
</feature>
<feature type="chain" id="PRO_0000042625" description="Hyaluronidase-1">
    <location>
        <begin position="22"/>
        <end position="435"/>
    </location>
</feature>
<feature type="domain" description="EGF-like">
    <location>
        <begin position="418"/>
        <end position="429"/>
    </location>
</feature>
<feature type="active site" description="Proton donor" evidence="1">
    <location>
        <position position="131"/>
    </location>
</feature>
<feature type="glycosylation site" description="N-linked (GlcNAc...) asparagine" evidence="2">
    <location>
        <position position="70"/>
    </location>
</feature>
<feature type="glycosylation site" description="N-linked (GlcNAc...) asparagine" evidence="2">
    <location>
        <position position="99"/>
    </location>
</feature>
<feature type="glycosylation site" description="N-linked (GlcNAc...) asparagine" evidence="2">
    <location>
        <position position="107"/>
    </location>
</feature>
<feature type="glycosylation site" description="N-linked (GlcNAc...) asparagine" evidence="2">
    <location>
        <position position="121"/>
    </location>
</feature>
<feature type="glycosylation site" description="N-linked (GlcNAc...) asparagine" evidence="2">
    <location>
        <position position="216"/>
    </location>
</feature>
<feature type="glycosylation site" description="N-linked (GlcNAc...) asparagine" evidence="2">
    <location>
        <position position="256"/>
    </location>
</feature>
<feature type="glycosylation site" description="N-linked (GlcNAc...) asparagine" evidence="2">
    <location>
        <position position="350"/>
    </location>
</feature>
<feature type="disulfide bond" evidence="1">
    <location>
        <begin position="43"/>
        <end position="333"/>
    </location>
</feature>
<feature type="disulfide bond" evidence="1">
    <location>
        <begin position="207"/>
        <end position="221"/>
    </location>
</feature>
<feature type="disulfide bond" evidence="1">
    <location>
        <begin position="358"/>
        <end position="369"/>
    </location>
</feature>
<feature type="disulfide bond" evidence="1">
    <location>
        <begin position="363"/>
        <end position="418"/>
    </location>
</feature>
<feature type="disulfide bond" evidence="1">
    <location>
        <begin position="420"/>
        <end position="429"/>
    </location>
</feature>
<proteinExistence type="evidence at transcript level"/>
<name>HYAL1_PIG</name>